<evidence type="ECO:0000255" key="1">
    <source>
        <dbReference type="HAMAP-Rule" id="MF_01149"/>
    </source>
</evidence>
<organism>
    <name type="scientific">Escherichia coli O127:H6 (strain E2348/69 / EPEC)</name>
    <dbReference type="NCBI Taxonomy" id="574521"/>
    <lineage>
        <taxon>Bacteria</taxon>
        <taxon>Pseudomonadati</taxon>
        <taxon>Pseudomonadota</taxon>
        <taxon>Gammaproteobacteria</taxon>
        <taxon>Enterobacterales</taxon>
        <taxon>Enterobacteriaceae</taxon>
        <taxon>Escherichia</taxon>
    </lineage>
</organism>
<feature type="chain" id="PRO_1000164163" description="Uncharacterized MFS-type transporter YcaD">
    <location>
        <begin position="1"/>
        <end position="382"/>
    </location>
</feature>
<feature type="transmembrane region" description="Helical" evidence="1">
    <location>
        <begin position="14"/>
        <end position="34"/>
    </location>
</feature>
<feature type="transmembrane region" description="Helical" evidence="1">
    <location>
        <begin position="45"/>
        <end position="65"/>
    </location>
</feature>
<feature type="transmembrane region" description="Helical" evidence="1">
    <location>
        <begin position="79"/>
        <end position="99"/>
    </location>
</feature>
<feature type="transmembrane region" description="Helical" evidence="1">
    <location>
        <begin position="102"/>
        <end position="122"/>
    </location>
</feature>
<feature type="transmembrane region" description="Helical" evidence="1">
    <location>
        <begin position="131"/>
        <end position="151"/>
    </location>
</feature>
<feature type="transmembrane region" description="Helical" evidence="1">
    <location>
        <begin position="157"/>
        <end position="177"/>
    </location>
</feature>
<feature type="transmembrane region" description="Helical" evidence="1">
    <location>
        <begin position="204"/>
        <end position="224"/>
    </location>
</feature>
<feature type="transmembrane region" description="Helical" evidence="1">
    <location>
        <begin position="235"/>
        <end position="255"/>
    </location>
</feature>
<feature type="transmembrane region" description="Helical" evidence="1">
    <location>
        <begin position="270"/>
        <end position="290"/>
    </location>
</feature>
<feature type="transmembrane region" description="Helical" evidence="1">
    <location>
        <begin position="291"/>
        <end position="311"/>
    </location>
</feature>
<feature type="transmembrane region" description="Helical" evidence="1">
    <location>
        <begin position="325"/>
        <end position="345"/>
    </location>
</feature>
<feature type="transmembrane region" description="Helical" evidence="1">
    <location>
        <begin position="348"/>
        <end position="368"/>
    </location>
</feature>
<comment type="subcellular location">
    <subcellularLocation>
        <location evidence="1">Cell inner membrane</location>
        <topology evidence="1">Multi-pass membrane protein</topology>
    </subcellularLocation>
</comment>
<comment type="similarity">
    <text evidence="1">Belongs to the major facilitator superfamily. YcaD (TC 2.A.1.26) family.</text>
</comment>
<keyword id="KW-0997">Cell inner membrane</keyword>
<keyword id="KW-1003">Cell membrane</keyword>
<keyword id="KW-0472">Membrane</keyword>
<keyword id="KW-1185">Reference proteome</keyword>
<keyword id="KW-0812">Transmembrane</keyword>
<keyword id="KW-1133">Transmembrane helix</keyword>
<keyword id="KW-0813">Transport</keyword>
<reference key="1">
    <citation type="journal article" date="2009" name="J. Bacteriol.">
        <title>Complete genome sequence and comparative genome analysis of enteropathogenic Escherichia coli O127:H6 strain E2348/69.</title>
        <authorList>
            <person name="Iguchi A."/>
            <person name="Thomson N.R."/>
            <person name="Ogura Y."/>
            <person name="Saunders D."/>
            <person name="Ooka T."/>
            <person name="Henderson I.R."/>
            <person name="Harris D."/>
            <person name="Asadulghani M."/>
            <person name="Kurokawa K."/>
            <person name="Dean P."/>
            <person name="Kenny B."/>
            <person name="Quail M.A."/>
            <person name="Thurston S."/>
            <person name="Dougan G."/>
            <person name="Hayashi T."/>
            <person name="Parkhill J."/>
            <person name="Frankel G."/>
        </authorList>
    </citation>
    <scope>NUCLEOTIDE SEQUENCE [LARGE SCALE GENOMIC DNA]</scope>
    <source>
        <strain>E2348/69 / EPEC</strain>
    </source>
</reference>
<name>YCAD_ECO27</name>
<accession>B7UMY7</accession>
<sequence length="382" mass="41460">MSTYTRPVMLLLSGLLLLTLAIAVLNTLVPLWLAQEHMSTWQVGVVSSSYFTGNLVGTLLTGYVIKRIGFNRSYYLASFIFAAGCAGLGLMIGFWSWLAWRFVAGVGCAMIWVVVESALMCSGTSRNRGRLLAAYMMVYYVGTFLGQLLVSKVSTELMSVLPWVTGLTLAGILPLLFTRVLNQQAENHDSTSITSMLKLRQARLGVNGCIISGIVLGSLYGLMPLYLNHKGVSNASIGFWMAVLVSAGILGQWPIGRLADKFGRLLVLRVQVFVVILGSIAMLSQAAMAPALFILGAAGFTLYPVAMAWACEKVEHHQLVAMNQALLLSYTVGSLLGPSFTAMLMQNFSDNLLFIMIASVSFIYLLMLLRNAGHTPKPVAHV</sequence>
<gene>
    <name evidence="1" type="primary">ycaD</name>
    <name type="ordered locus">E2348C_0894</name>
</gene>
<protein>
    <recommendedName>
        <fullName evidence="1">Uncharacterized MFS-type transporter YcaD</fullName>
    </recommendedName>
</protein>
<proteinExistence type="inferred from homology"/>
<dbReference type="EMBL" id="FM180568">
    <property type="protein sequence ID" value="CAS08442.1"/>
    <property type="molecule type" value="Genomic_DNA"/>
</dbReference>
<dbReference type="RefSeq" id="WP_000109295.1">
    <property type="nucleotide sequence ID" value="NC_011601.1"/>
</dbReference>
<dbReference type="SMR" id="B7UMY7"/>
<dbReference type="KEGG" id="ecg:E2348C_0894"/>
<dbReference type="HOGENOM" id="CLU_035018_1_2_6"/>
<dbReference type="Proteomes" id="UP000008205">
    <property type="component" value="Chromosome"/>
</dbReference>
<dbReference type="GO" id="GO:0005886">
    <property type="term" value="C:plasma membrane"/>
    <property type="evidence" value="ECO:0007669"/>
    <property type="project" value="UniProtKB-SubCell"/>
</dbReference>
<dbReference type="GO" id="GO:0022857">
    <property type="term" value="F:transmembrane transporter activity"/>
    <property type="evidence" value="ECO:0007669"/>
    <property type="project" value="UniProtKB-UniRule"/>
</dbReference>
<dbReference type="CDD" id="cd17477">
    <property type="entry name" value="MFS_YcaD_like"/>
    <property type="match status" value="1"/>
</dbReference>
<dbReference type="FunFam" id="1.20.1250.20:FF:000041">
    <property type="entry name" value="Uncharacterized MFS-type transporter YcaD"/>
    <property type="match status" value="1"/>
</dbReference>
<dbReference type="FunFam" id="1.20.1250.20:FF:000066">
    <property type="entry name" value="Uncharacterized MFS-type transporter YcaD"/>
    <property type="match status" value="1"/>
</dbReference>
<dbReference type="Gene3D" id="1.20.1250.20">
    <property type="entry name" value="MFS general substrate transporter like domains"/>
    <property type="match status" value="2"/>
</dbReference>
<dbReference type="HAMAP" id="MF_01149">
    <property type="entry name" value="MFS_YcaD"/>
    <property type="match status" value="1"/>
</dbReference>
<dbReference type="InterPro" id="IPR011701">
    <property type="entry name" value="MFS"/>
</dbReference>
<dbReference type="InterPro" id="IPR020846">
    <property type="entry name" value="MFS_dom"/>
</dbReference>
<dbReference type="InterPro" id="IPR036259">
    <property type="entry name" value="MFS_trans_sf"/>
</dbReference>
<dbReference type="InterPro" id="IPR023745">
    <property type="entry name" value="MFS_YcaD"/>
</dbReference>
<dbReference type="InterPro" id="IPR047200">
    <property type="entry name" value="MFS_YcaD-like"/>
</dbReference>
<dbReference type="NCBIfam" id="NF002962">
    <property type="entry name" value="PRK03633.1"/>
    <property type="match status" value="1"/>
</dbReference>
<dbReference type="PANTHER" id="PTHR23521">
    <property type="entry name" value="TRANSPORTER MFS SUPERFAMILY"/>
    <property type="match status" value="1"/>
</dbReference>
<dbReference type="PANTHER" id="PTHR23521:SF2">
    <property type="entry name" value="TRANSPORTER MFS SUPERFAMILY"/>
    <property type="match status" value="1"/>
</dbReference>
<dbReference type="Pfam" id="PF07690">
    <property type="entry name" value="MFS_1"/>
    <property type="match status" value="1"/>
</dbReference>
<dbReference type="SUPFAM" id="SSF103473">
    <property type="entry name" value="MFS general substrate transporter"/>
    <property type="match status" value="1"/>
</dbReference>
<dbReference type="PROSITE" id="PS50850">
    <property type="entry name" value="MFS"/>
    <property type="match status" value="1"/>
</dbReference>